<accession>Q5L6I4</accession>
<feature type="chain" id="PRO_0000111681" description="Ribonuclease HIII">
    <location>
        <begin position="1"/>
        <end position="300"/>
    </location>
</feature>
<feature type="domain" description="RNase H type-2" evidence="2">
    <location>
        <begin position="86"/>
        <end position="300"/>
    </location>
</feature>
<feature type="binding site" evidence="1">
    <location>
        <position position="92"/>
    </location>
    <ligand>
        <name>a divalent metal cation</name>
        <dbReference type="ChEBI" id="CHEBI:60240"/>
    </ligand>
</feature>
<feature type="binding site" evidence="1">
    <location>
        <position position="93"/>
    </location>
    <ligand>
        <name>a divalent metal cation</name>
        <dbReference type="ChEBI" id="CHEBI:60240"/>
    </ligand>
</feature>
<feature type="binding site" evidence="1">
    <location>
        <position position="196"/>
    </location>
    <ligand>
        <name>a divalent metal cation</name>
        <dbReference type="ChEBI" id="CHEBI:60240"/>
    </ligand>
</feature>
<reference key="1">
    <citation type="journal article" date="2005" name="Genome Res.">
        <title>The Chlamydophila abortus genome sequence reveals an array of variable proteins that contribute to interspecies variation.</title>
        <authorList>
            <person name="Thomson N.R."/>
            <person name="Yeats C."/>
            <person name="Bell K."/>
            <person name="Holden M.T.G."/>
            <person name="Bentley S.D."/>
            <person name="Livingstone M."/>
            <person name="Cerdeno-Tarraga A.-M."/>
            <person name="Harris B."/>
            <person name="Doggett J."/>
            <person name="Ormond D."/>
            <person name="Mungall K."/>
            <person name="Clarke K."/>
            <person name="Feltwell T."/>
            <person name="Hance Z."/>
            <person name="Sanders M."/>
            <person name="Quail M.A."/>
            <person name="Price C."/>
            <person name="Barrell B.G."/>
            <person name="Parkhill J."/>
            <person name="Longbottom D."/>
        </authorList>
    </citation>
    <scope>NUCLEOTIDE SEQUENCE [LARGE SCALE GENOMIC DNA]</scope>
    <source>
        <strain>DSM 27085 / S26/3</strain>
    </source>
</reference>
<protein>
    <recommendedName>
        <fullName evidence="1">Ribonuclease HIII</fullName>
        <shortName evidence="1">RNase HIII</shortName>
        <ecNumber evidence="1">3.1.26.4</ecNumber>
    </recommendedName>
</protein>
<organism>
    <name type="scientific">Chlamydia abortus (strain DSM 27085 / S26/3)</name>
    <name type="common">Chlamydophila abortus</name>
    <dbReference type="NCBI Taxonomy" id="218497"/>
    <lineage>
        <taxon>Bacteria</taxon>
        <taxon>Pseudomonadati</taxon>
        <taxon>Chlamydiota</taxon>
        <taxon>Chlamydiia</taxon>
        <taxon>Chlamydiales</taxon>
        <taxon>Chlamydiaceae</taxon>
        <taxon>Chlamydia/Chlamydophila group</taxon>
        <taxon>Chlamydia</taxon>
    </lineage>
</organism>
<gene>
    <name evidence="1" type="primary">rnhC</name>
    <name type="ordered locus">CAB291</name>
</gene>
<sequence length="300" mass="33535">MSTPFVTTLSPSLHGLLKDRLEEKGFIFTQPQHTIFQARSPSVSCTLYNSGKLVVQGKGAQEFIDFFLEPEILLTFTHNRMEKDLRPRLGVDESGKGDFFGPLCIAGVYARDAETLKNLYKTKIQDSKMLNDNQILALAKTIRACSTYDVMILYPEKYNELYAKFHNLNLLLAWAHATIIDQLAPRPSGEVFAISDQFASSESVLLQALRKKSTDISVIQKVRAEQDIVVAAASILAREAFIHTITKLEQRFSVKLPKGASAHVKSAGKTILNTQGKEILSLVCKTHFKTFYEICDSTDI</sequence>
<name>RNH3_CHLAB</name>
<evidence type="ECO:0000255" key="1">
    <source>
        <dbReference type="HAMAP-Rule" id="MF_00053"/>
    </source>
</evidence>
<evidence type="ECO:0000255" key="2">
    <source>
        <dbReference type="PROSITE-ProRule" id="PRU01319"/>
    </source>
</evidence>
<comment type="function">
    <text evidence="1">Endonuclease that specifically degrades the RNA of RNA-DNA hybrids.</text>
</comment>
<comment type="catalytic activity">
    <reaction evidence="1">
        <text>Endonucleolytic cleavage to 5'-phosphomonoester.</text>
        <dbReference type="EC" id="3.1.26.4"/>
    </reaction>
</comment>
<comment type="cofactor">
    <cofactor evidence="1">
        <name>Mn(2+)</name>
        <dbReference type="ChEBI" id="CHEBI:29035"/>
    </cofactor>
    <cofactor evidence="1">
        <name>Mg(2+)</name>
        <dbReference type="ChEBI" id="CHEBI:18420"/>
    </cofactor>
    <text evidence="1">Manganese or magnesium. Binds 1 divalent metal ion per monomer in the absence of substrate. May bind a second metal ion after substrate binding.</text>
</comment>
<comment type="subcellular location">
    <subcellularLocation>
        <location evidence="1">Cytoplasm</location>
    </subcellularLocation>
</comment>
<comment type="similarity">
    <text evidence="1">Belongs to the RNase HII family. RnhC subfamily.</text>
</comment>
<dbReference type="EC" id="3.1.26.4" evidence="1"/>
<dbReference type="EMBL" id="CR848038">
    <property type="protein sequence ID" value="CAH63741.1"/>
    <property type="molecule type" value="Genomic_DNA"/>
</dbReference>
<dbReference type="RefSeq" id="WP_006343943.1">
    <property type="nucleotide sequence ID" value="NC_004552.2"/>
</dbReference>
<dbReference type="SMR" id="Q5L6I4"/>
<dbReference type="GeneID" id="93024844"/>
<dbReference type="KEGG" id="cab:CAB291"/>
<dbReference type="eggNOG" id="COG1039">
    <property type="taxonomic scope" value="Bacteria"/>
</dbReference>
<dbReference type="HOGENOM" id="CLU_059546_0_0_0"/>
<dbReference type="OrthoDB" id="9777935at2"/>
<dbReference type="Proteomes" id="UP000001012">
    <property type="component" value="Chromosome"/>
</dbReference>
<dbReference type="GO" id="GO:0005737">
    <property type="term" value="C:cytoplasm"/>
    <property type="evidence" value="ECO:0007669"/>
    <property type="project" value="UniProtKB-SubCell"/>
</dbReference>
<dbReference type="GO" id="GO:0032299">
    <property type="term" value="C:ribonuclease H2 complex"/>
    <property type="evidence" value="ECO:0007669"/>
    <property type="project" value="TreeGrafter"/>
</dbReference>
<dbReference type="GO" id="GO:0000287">
    <property type="term" value="F:magnesium ion binding"/>
    <property type="evidence" value="ECO:0007669"/>
    <property type="project" value="UniProtKB-UniRule"/>
</dbReference>
<dbReference type="GO" id="GO:0003723">
    <property type="term" value="F:RNA binding"/>
    <property type="evidence" value="ECO:0007669"/>
    <property type="project" value="InterPro"/>
</dbReference>
<dbReference type="GO" id="GO:0004523">
    <property type="term" value="F:RNA-DNA hybrid ribonuclease activity"/>
    <property type="evidence" value="ECO:0007669"/>
    <property type="project" value="UniProtKB-UniRule"/>
</dbReference>
<dbReference type="GO" id="GO:0043137">
    <property type="term" value="P:DNA replication, removal of RNA primer"/>
    <property type="evidence" value="ECO:0007669"/>
    <property type="project" value="TreeGrafter"/>
</dbReference>
<dbReference type="GO" id="GO:0006298">
    <property type="term" value="P:mismatch repair"/>
    <property type="evidence" value="ECO:0007669"/>
    <property type="project" value="TreeGrafter"/>
</dbReference>
<dbReference type="CDD" id="cd06590">
    <property type="entry name" value="RNase_HII_bacteria_HIII_like"/>
    <property type="match status" value="1"/>
</dbReference>
<dbReference type="CDD" id="cd14796">
    <property type="entry name" value="RNAse_HIII_N"/>
    <property type="match status" value="1"/>
</dbReference>
<dbReference type="Gene3D" id="3.30.420.10">
    <property type="entry name" value="Ribonuclease H-like superfamily/Ribonuclease H"/>
    <property type="match status" value="1"/>
</dbReference>
<dbReference type="Gene3D" id="3.30.310.10">
    <property type="entry name" value="TATA-Binding Protein"/>
    <property type="match status" value="1"/>
</dbReference>
<dbReference type="HAMAP" id="MF_00053">
    <property type="entry name" value="RNase_HIII"/>
    <property type="match status" value="1"/>
</dbReference>
<dbReference type="InterPro" id="IPR001352">
    <property type="entry name" value="RNase_HII/HIII"/>
</dbReference>
<dbReference type="InterPro" id="IPR024567">
    <property type="entry name" value="RNase_HII/HIII_dom"/>
</dbReference>
<dbReference type="InterPro" id="IPR004641">
    <property type="entry name" value="RNase_HIII"/>
</dbReference>
<dbReference type="InterPro" id="IPR024568">
    <property type="entry name" value="RNase_HIII_N"/>
</dbReference>
<dbReference type="InterPro" id="IPR012337">
    <property type="entry name" value="RNaseH-like_sf"/>
</dbReference>
<dbReference type="InterPro" id="IPR036397">
    <property type="entry name" value="RNaseH_sf"/>
</dbReference>
<dbReference type="InterPro" id="IPR012295">
    <property type="entry name" value="TBP_dom_sf"/>
</dbReference>
<dbReference type="NCBIfam" id="TIGR00716">
    <property type="entry name" value="rnhC"/>
    <property type="match status" value="1"/>
</dbReference>
<dbReference type="PANTHER" id="PTHR10954:SF23">
    <property type="entry name" value="RIBONUCLEASE"/>
    <property type="match status" value="1"/>
</dbReference>
<dbReference type="PANTHER" id="PTHR10954">
    <property type="entry name" value="RIBONUCLEASE H2 SUBUNIT A"/>
    <property type="match status" value="1"/>
</dbReference>
<dbReference type="Pfam" id="PF11858">
    <property type="entry name" value="DUF3378"/>
    <property type="match status" value="1"/>
</dbReference>
<dbReference type="Pfam" id="PF01351">
    <property type="entry name" value="RNase_HII"/>
    <property type="match status" value="1"/>
</dbReference>
<dbReference type="PIRSF" id="PIRSF037748">
    <property type="entry name" value="RnhC"/>
    <property type="match status" value="1"/>
</dbReference>
<dbReference type="SUPFAM" id="SSF53098">
    <property type="entry name" value="Ribonuclease H-like"/>
    <property type="match status" value="1"/>
</dbReference>
<dbReference type="PROSITE" id="PS51975">
    <property type="entry name" value="RNASE_H_2"/>
    <property type="match status" value="1"/>
</dbReference>
<keyword id="KW-0963">Cytoplasm</keyword>
<keyword id="KW-0255">Endonuclease</keyword>
<keyword id="KW-0378">Hydrolase</keyword>
<keyword id="KW-0460">Magnesium</keyword>
<keyword id="KW-0479">Metal-binding</keyword>
<keyword id="KW-0540">Nuclease</keyword>
<proteinExistence type="inferred from homology"/>